<name>RECR_METC4</name>
<comment type="function">
    <text evidence="1">May play a role in DNA repair. It seems to be involved in an RecBC-independent recombinational process of DNA repair. It may act with RecF and RecO.</text>
</comment>
<comment type="similarity">
    <text evidence="1">Belongs to the RecR family.</text>
</comment>
<accession>B7KVW7</accession>
<reference key="1">
    <citation type="submission" date="2008-12" db="EMBL/GenBank/DDBJ databases">
        <title>Complete sequence of chromosome of Methylobacterium chloromethanicum CM4.</title>
        <authorList>
            <consortium name="US DOE Joint Genome Institute"/>
            <person name="Lucas S."/>
            <person name="Copeland A."/>
            <person name="Lapidus A."/>
            <person name="Glavina del Rio T."/>
            <person name="Dalin E."/>
            <person name="Tice H."/>
            <person name="Bruce D."/>
            <person name="Goodwin L."/>
            <person name="Pitluck S."/>
            <person name="Chertkov O."/>
            <person name="Brettin T."/>
            <person name="Detter J.C."/>
            <person name="Han C."/>
            <person name="Larimer F."/>
            <person name="Land M."/>
            <person name="Hauser L."/>
            <person name="Kyrpides N."/>
            <person name="Mikhailova N."/>
            <person name="Marx C."/>
            <person name="Richardson P."/>
        </authorList>
    </citation>
    <scope>NUCLEOTIDE SEQUENCE [LARGE SCALE GENOMIC DNA]</scope>
    <source>
        <strain>CM4 / NCIMB 13688</strain>
    </source>
</reference>
<protein>
    <recommendedName>
        <fullName evidence="1">Recombination protein RecR</fullName>
    </recommendedName>
</protein>
<sequence length="201" mass="21583">MPQAVAGPEIERLIQLLGRMPGLGPRSARRAALQLIKKRETLLAPLADAMRVAAERIVVCRSCGNVDTSDPCTICRDETRDPTTLVVVEDVSDLWALERSGAVKARYHVLGGVLSALDGVRPEHLTIARLVERAGEPGVKEIILALNATVDGQTTAHYVTESIKPFGLTVTRLAHGVPVGGELDYLDEGTLTAAIRSRTAF</sequence>
<evidence type="ECO:0000255" key="1">
    <source>
        <dbReference type="HAMAP-Rule" id="MF_00017"/>
    </source>
</evidence>
<dbReference type="EMBL" id="CP001298">
    <property type="protein sequence ID" value="ACK82783.1"/>
    <property type="molecule type" value="Genomic_DNA"/>
</dbReference>
<dbReference type="RefSeq" id="WP_003599880.1">
    <property type="nucleotide sequence ID" value="NC_011757.1"/>
</dbReference>
<dbReference type="SMR" id="B7KVW7"/>
<dbReference type="GeneID" id="72989295"/>
<dbReference type="KEGG" id="mch:Mchl_1920"/>
<dbReference type="HOGENOM" id="CLU_060739_1_1_5"/>
<dbReference type="Proteomes" id="UP000002385">
    <property type="component" value="Chromosome"/>
</dbReference>
<dbReference type="GO" id="GO:0003677">
    <property type="term" value="F:DNA binding"/>
    <property type="evidence" value="ECO:0007669"/>
    <property type="project" value="UniProtKB-UniRule"/>
</dbReference>
<dbReference type="GO" id="GO:0008270">
    <property type="term" value="F:zinc ion binding"/>
    <property type="evidence" value="ECO:0007669"/>
    <property type="project" value="UniProtKB-KW"/>
</dbReference>
<dbReference type="GO" id="GO:0006310">
    <property type="term" value="P:DNA recombination"/>
    <property type="evidence" value="ECO:0007669"/>
    <property type="project" value="UniProtKB-UniRule"/>
</dbReference>
<dbReference type="GO" id="GO:0006281">
    <property type="term" value="P:DNA repair"/>
    <property type="evidence" value="ECO:0007669"/>
    <property type="project" value="UniProtKB-UniRule"/>
</dbReference>
<dbReference type="CDD" id="cd01025">
    <property type="entry name" value="TOPRIM_recR"/>
    <property type="match status" value="1"/>
</dbReference>
<dbReference type="Gene3D" id="3.40.1360.10">
    <property type="match status" value="1"/>
</dbReference>
<dbReference type="Gene3D" id="6.10.250.240">
    <property type="match status" value="1"/>
</dbReference>
<dbReference type="Gene3D" id="1.10.8.420">
    <property type="entry name" value="RecR Domain 1"/>
    <property type="match status" value="1"/>
</dbReference>
<dbReference type="HAMAP" id="MF_00017">
    <property type="entry name" value="RecR"/>
    <property type="match status" value="1"/>
</dbReference>
<dbReference type="InterPro" id="IPR000093">
    <property type="entry name" value="DNA_Rcmb_RecR"/>
</dbReference>
<dbReference type="InterPro" id="IPR023627">
    <property type="entry name" value="Rcmb_RecR"/>
</dbReference>
<dbReference type="InterPro" id="IPR015967">
    <property type="entry name" value="Rcmb_RecR_Znf"/>
</dbReference>
<dbReference type="InterPro" id="IPR006171">
    <property type="entry name" value="TOPRIM_dom"/>
</dbReference>
<dbReference type="InterPro" id="IPR034137">
    <property type="entry name" value="TOPRIM_RecR"/>
</dbReference>
<dbReference type="NCBIfam" id="TIGR00615">
    <property type="entry name" value="recR"/>
    <property type="match status" value="1"/>
</dbReference>
<dbReference type="PANTHER" id="PTHR30446">
    <property type="entry name" value="RECOMBINATION PROTEIN RECR"/>
    <property type="match status" value="1"/>
</dbReference>
<dbReference type="PANTHER" id="PTHR30446:SF0">
    <property type="entry name" value="RECOMBINATION PROTEIN RECR"/>
    <property type="match status" value="1"/>
</dbReference>
<dbReference type="Pfam" id="PF21175">
    <property type="entry name" value="RecR_C"/>
    <property type="match status" value="1"/>
</dbReference>
<dbReference type="Pfam" id="PF21176">
    <property type="entry name" value="RecR_HhH"/>
    <property type="match status" value="1"/>
</dbReference>
<dbReference type="Pfam" id="PF02132">
    <property type="entry name" value="RecR_ZnF"/>
    <property type="match status" value="1"/>
</dbReference>
<dbReference type="Pfam" id="PF13662">
    <property type="entry name" value="Toprim_4"/>
    <property type="match status" value="1"/>
</dbReference>
<dbReference type="SMART" id="SM00493">
    <property type="entry name" value="TOPRIM"/>
    <property type="match status" value="1"/>
</dbReference>
<dbReference type="SUPFAM" id="SSF111304">
    <property type="entry name" value="Recombination protein RecR"/>
    <property type="match status" value="1"/>
</dbReference>
<dbReference type="PROSITE" id="PS01300">
    <property type="entry name" value="RECR"/>
    <property type="match status" value="1"/>
</dbReference>
<dbReference type="PROSITE" id="PS50880">
    <property type="entry name" value="TOPRIM"/>
    <property type="match status" value="1"/>
</dbReference>
<gene>
    <name evidence="1" type="primary">recR</name>
    <name type="ordered locus">Mchl_1920</name>
</gene>
<proteinExistence type="inferred from homology"/>
<keyword id="KW-0227">DNA damage</keyword>
<keyword id="KW-0233">DNA recombination</keyword>
<keyword id="KW-0234">DNA repair</keyword>
<keyword id="KW-0479">Metal-binding</keyword>
<keyword id="KW-0862">Zinc</keyword>
<keyword id="KW-0863">Zinc-finger</keyword>
<feature type="chain" id="PRO_1000195398" description="Recombination protein RecR">
    <location>
        <begin position="1"/>
        <end position="201"/>
    </location>
</feature>
<feature type="domain" description="Toprim" evidence="1">
    <location>
        <begin position="83"/>
        <end position="178"/>
    </location>
</feature>
<feature type="zinc finger region" description="C4-type" evidence="1">
    <location>
        <begin position="60"/>
        <end position="75"/>
    </location>
</feature>
<organism>
    <name type="scientific">Methylorubrum extorquens (strain CM4 / NCIMB 13688)</name>
    <name type="common">Methylobacterium extorquens</name>
    <dbReference type="NCBI Taxonomy" id="440085"/>
    <lineage>
        <taxon>Bacteria</taxon>
        <taxon>Pseudomonadati</taxon>
        <taxon>Pseudomonadota</taxon>
        <taxon>Alphaproteobacteria</taxon>
        <taxon>Hyphomicrobiales</taxon>
        <taxon>Methylobacteriaceae</taxon>
        <taxon>Methylorubrum</taxon>
    </lineage>
</organism>